<reference key="1">
    <citation type="journal article" date="2006" name="Mol. Microbiol.">
        <title>Role of pathogenicity island-associated integrases in the genome plasticity of uropathogenic Escherichia coli strain 536.</title>
        <authorList>
            <person name="Hochhut B."/>
            <person name="Wilde C."/>
            <person name="Balling G."/>
            <person name="Middendorf B."/>
            <person name="Dobrindt U."/>
            <person name="Brzuszkiewicz E."/>
            <person name="Gottschalk G."/>
            <person name="Carniel E."/>
            <person name="Hacker J."/>
        </authorList>
    </citation>
    <scope>NUCLEOTIDE SEQUENCE [LARGE SCALE GENOMIC DNA]</scope>
    <source>
        <strain>536 / UPEC</strain>
    </source>
</reference>
<sequence>MTAIAPVITIDGPSGAGKGTLCKAMAEALQWHLLDSGAIYRVLALAALHHHVDVASEDALVPLASHLDVRFVSTNGNLEVILEGEDVSGEIRTQEVANAASQVAAFPRVREALLRRQRAFRELPGLIADGRDMGTVVFPDAPVKIFLDASSEERAHRRMLQLQEKGFSVNFERLLAEIKERDDRDRNRAVAPLVPAADALVLDSTTLSIEQVIEKALQYARQKLALA</sequence>
<proteinExistence type="inferred from homology"/>
<gene>
    <name evidence="1" type="primary">cmk</name>
    <name type="ordered locus">ECP_0921</name>
</gene>
<keyword id="KW-0067">ATP-binding</keyword>
<keyword id="KW-0963">Cytoplasm</keyword>
<keyword id="KW-0418">Kinase</keyword>
<keyword id="KW-0547">Nucleotide-binding</keyword>
<keyword id="KW-0808">Transferase</keyword>
<comment type="catalytic activity">
    <reaction evidence="1">
        <text>CMP + ATP = CDP + ADP</text>
        <dbReference type="Rhea" id="RHEA:11600"/>
        <dbReference type="ChEBI" id="CHEBI:30616"/>
        <dbReference type="ChEBI" id="CHEBI:58069"/>
        <dbReference type="ChEBI" id="CHEBI:60377"/>
        <dbReference type="ChEBI" id="CHEBI:456216"/>
        <dbReference type="EC" id="2.7.4.25"/>
    </reaction>
</comment>
<comment type="catalytic activity">
    <reaction evidence="1">
        <text>dCMP + ATP = dCDP + ADP</text>
        <dbReference type="Rhea" id="RHEA:25094"/>
        <dbReference type="ChEBI" id="CHEBI:30616"/>
        <dbReference type="ChEBI" id="CHEBI:57566"/>
        <dbReference type="ChEBI" id="CHEBI:58593"/>
        <dbReference type="ChEBI" id="CHEBI:456216"/>
        <dbReference type="EC" id="2.7.4.25"/>
    </reaction>
</comment>
<comment type="subcellular location">
    <subcellularLocation>
        <location evidence="1">Cytoplasm</location>
    </subcellularLocation>
</comment>
<comment type="similarity">
    <text evidence="1">Belongs to the cytidylate kinase family. Type 1 subfamily.</text>
</comment>
<protein>
    <recommendedName>
        <fullName evidence="1">Cytidylate kinase</fullName>
        <shortName evidence="1">CK</shortName>
        <ecNumber evidence="1">2.7.4.25</ecNumber>
    </recommendedName>
    <alternativeName>
        <fullName evidence="1">Cytidine monophosphate kinase</fullName>
        <shortName evidence="1">CMP kinase</shortName>
    </alternativeName>
</protein>
<dbReference type="EC" id="2.7.4.25" evidence="1"/>
<dbReference type="EMBL" id="CP000247">
    <property type="protein sequence ID" value="ABG68936.1"/>
    <property type="molecule type" value="Genomic_DNA"/>
</dbReference>
<dbReference type="RefSeq" id="WP_000125016.1">
    <property type="nucleotide sequence ID" value="NC_008253.1"/>
</dbReference>
<dbReference type="SMR" id="Q0TJE3"/>
<dbReference type="GeneID" id="93776507"/>
<dbReference type="KEGG" id="ecp:ECP_0921"/>
<dbReference type="HOGENOM" id="CLU_079959_0_2_6"/>
<dbReference type="Proteomes" id="UP000009182">
    <property type="component" value="Chromosome"/>
</dbReference>
<dbReference type="GO" id="GO:0005829">
    <property type="term" value="C:cytosol"/>
    <property type="evidence" value="ECO:0007669"/>
    <property type="project" value="TreeGrafter"/>
</dbReference>
<dbReference type="GO" id="GO:0005524">
    <property type="term" value="F:ATP binding"/>
    <property type="evidence" value="ECO:0007669"/>
    <property type="project" value="UniProtKB-UniRule"/>
</dbReference>
<dbReference type="GO" id="GO:0036430">
    <property type="term" value="F:CMP kinase activity"/>
    <property type="evidence" value="ECO:0007669"/>
    <property type="project" value="RHEA"/>
</dbReference>
<dbReference type="GO" id="GO:0036431">
    <property type="term" value="F:dCMP kinase activity"/>
    <property type="evidence" value="ECO:0007669"/>
    <property type="project" value="RHEA"/>
</dbReference>
<dbReference type="GO" id="GO:0015949">
    <property type="term" value="P:nucleobase-containing small molecule interconversion"/>
    <property type="evidence" value="ECO:0007669"/>
    <property type="project" value="TreeGrafter"/>
</dbReference>
<dbReference type="GO" id="GO:0006220">
    <property type="term" value="P:pyrimidine nucleotide metabolic process"/>
    <property type="evidence" value="ECO:0007669"/>
    <property type="project" value="UniProtKB-UniRule"/>
</dbReference>
<dbReference type="CDD" id="cd02020">
    <property type="entry name" value="CMPK"/>
    <property type="match status" value="1"/>
</dbReference>
<dbReference type="FunFam" id="3.40.50.300:FF:000262">
    <property type="entry name" value="Cytidylate kinase"/>
    <property type="match status" value="1"/>
</dbReference>
<dbReference type="Gene3D" id="3.40.50.300">
    <property type="entry name" value="P-loop containing nucleotide triphosphate hydrolases"/>
    <property type="match status" value="1"/>
</dbReference>
<dbReference type="HAMAP" id="MF_00238">
    <property type="entry name" value="Cytidyl_kinase_type1"/>
    <property type="match status" value="1"/>
</dbReference>
<dbReference type="InterPro" id="IPR003136">
    <property type="entry name" value="Cytidylate_kin"/>
</dbReference>
<dbReference type="InterPro" id="IPR011994">
    <property type="entry name" value="Cytidylate_kinase_dom"/>
</dbReference>
<dbReference type="InterPro" id="IPR027417">
    <property type="entry name" value="P-loop_NTPase"/>
</dbReference>
<dbReference type="NCBIfam" id="TIGR00017">
    <property type="entry name" value="cmk"/>
    <property type="match status" value="1"/>
</dbReference>
<dbReference type="PANTHER" id="PTHR21299:SF2">
    <property type="entry name" value="CYTIDYLATE KINASE"/>
    <property type="match status" value="1"/>
</dbReference>
<dbReference type="PANTHER" id="PTHR21299">
    <property type="entry name" value="CYTIDYLATE KINASE/PANTOATE-BETA-ALANINE LIGASE"/>
    <property type="match status" value="1"/>
</dbReference>
<dbReference type="Pfam" id="PF02224">
    <property type="entry name" value="Cytidylate_kin"/>
    <property type="match status" value="1"/>
</dbReference>
<dbReference type="SUPFAM" id="SSF52540">
    <property type="entry name" value="P-loop containing nucleoside triphosphate hydrolases"/>
    <property type="match status" value="1"/>
</dbReference>
<feature type="chain" id="PRO_1000048218" description="Cytidylate kinase">
    <location>
        <begin position="1"/>
        <end position="227"/>
    </location>
</feature>
<feature type="binding site" evidence="1">
    <location>
        <begin position="12"/>
        <end position="20"/>
    </location>
    <ligand>
        <name>ATP</name>
        <dbReference type="ChEBI" id="CHEBI:30616"/>
    </ligand>
</feature>
<organism>
    <name type="scientific">Escherichia coli O6:K15:H31 (strain 536 / UPEC)</name>
    <dbReference type="NCBI Taxonomy" id="362663"/>
    <lineage>
        <taxon>Bacteria</taxon>
        <taxon>Pseudomonadati</taxon>
        <taxon>Pseudomonadota</taxon>
        <taxon>Gammaproteobacteria</taxon>
        <taxon>Enterobacterales</taxon>
        <taxon>Enterobacteriaceae</taxon>
        <taxon>Escherichia</taxon>
    </lineage>
</organism>
<evidence type="ECO:0000255" key="1">
    <source>
        <dbReference type="HAMAP-Rule" id="MF_00238"/>
    </source>
</evidence>
<name>KCY_ECOL5</name>
<accession>Q0TJE3</accession>